<proteinExistence type="evidence at protein level"/>
<accession>P02602</accession>
<accession>P02603</accession>
<comment type="function">
    <text evidence="2">Non-regulatory myosin light chain required for proper formation and/or maintenance of myofibers, and thus appropriate muscle function.</text>
</comment>
<comment type="subunit">
    <text evidence="2">Myosin is a hexamer of 2 heavy chains and 4 light chains. Does not bind calcium.</text>
</comment>
<comment type="alternative products">
    <event type="alternative splicing"/>
    <isoform>
        <id>P02602-1</id>
        <name>MLC1</name>
        <sequence type="displayed"/>
    </isoform>
    <isoform>
        <id>P02602-2</id>
        <id>P02603-1</id>
        <name>MLC3</name>
        <sequence type="described" ref="VSP_038688"/>
    </isoform>
</comment>
<comment type="PTM">
    <text>Isoform MLC3 is acetylated at position 2.</text>
</comment>
<organism>
    <name type="scientific">Oryctolagus cuniculus</name>
    <name type="common">Rabbit</name>
    <dbReference type="NCBI Taxonomy" id="9986"/>
    <lineage>
        <taxon>Eukaryota</taxon>
        <taxon>Metazoa</taxon>
        <taxon>Chordata</taxon>
        <taxon>Craniata</taxon>
        <taxon>Vertebrata</taxon>
        <taxon>Euteleostomi</taxon>
        <taxon>Mammalia</taxon>
        <taxon>Eutheria</taxon>
        <taxon>Euarchontoglires</taxon>
        <taxon>Glires</taxon>
        <taxon>Lagomorpha</taxon>
        <taxon>Leporidae</taxon>
        <taxon>Oryctolagus</taxon>
    </lineage>
</organism>
<name>MYL1_RABIT</name>
<gene>
    <name type="primary">MYL1</name>
</gene>
<reference key="1">
    <citation type="journal article" date="1990" name="Nucleic Acids Res.">
        <title>Sequence of the myosin light chain 1/3 isolated from a rabbit fast skeletal muscle lambda library.</title>
        <authorList>
            <person name="Mueller B."/>
            <person name="Maeda K."/>
            <person name="Wittinghofer A."/>
        </authorList>
    </citation>
    <scope>NUCLEOTIDE SEQUENCE [MRNA] (ISOFORMS MLC1 AND MLC3)</scope>
    <source>
        <tissue>Fast-twitch skeletal muscle</tissue>
    </source>
</reference>
<reference key="2">
    <citation type="journal article" date="1974" name="Eur. J. Biochem.">
        <title>The amino-acid sequence of the alkali light chains of rabbit skeletal-muscle myosin.</title>
        <authorList>
            <person name="Frank G."/>
            <person name="Weeds A.G."/>
        </authorList>
    </citation>
    <scope>PROTEIN SEQUENCE OF 3-192 (ISOFORMS MLC1 AND MLC3)</scope>
    <scope>CLEAVAGE OF INITIATOR METHIONINE (ISOFORM MLC3)</scope>
    <scope>ACETYLATION AT SER-2 (ISOFORM MLC3)</scope>
    <source>
        <tissue>Skeletal muscle</tissue>
    </source>
</reference>
<reference key="3">
    <citation type="journal article" date="1975" name="FEBS Lett.">
        <title>Cyanogen bromide fragments of the cardiac I light chain from bovine myosin: evidence for sequence homology with rabbit skeletal myosin alkali light chains.</title>
        <authorList>
            <person name="Weeds A.G."/>
        </authorList>
    </citation>
    <scope>SEQUENCE REVISION TO 141-142</scope>
</reference>
<reference key="4">
    <citation type="journal article" date="1982" name="Biochem. Soc. Trans.">
        <title>Discovery of alpha-N-trimethylalanine in myosin light chains and its role in actomyosin interaction.</title>
        <authorList>
            <person name="Henry G.D."/>
            <person name="Dalgarno D.C."/>
            <person name="Levine B.A."/>
            <person name="Trayer I.P."/>
        </authorList>
    </citation>
    <scope>METHYLATION</scope>
</reference>
<reference key="5">
    <citation type="journal article" date="1982" name="FEBS Lett.">
        <title>The occurrence of alpha-N-trimethylalanine as the N-terminal amino acid of some myosin light chains.</title>
        <authorList>
            <person name="Henry G.D."/>
            <person name="Dalgarno D.C."/>
            <person name="Marcus G."/>
            <person name="Scott M."/>
            <person name="Levine B.A."/>
            <person name="Trayer I.P."/>
        </authorList>
    </citation>
    <scope>METHYLATION AT ALA-2</scope>
</reference>
<evidence type="ECO:0000250" key="1">
    <source>
        <dbReference type="UniProtKB" id="P02600"/>
    </source>
</evidence>
<evidence type="ECO:0000250" key="2">
    <source>
        <dbReference type="UniProtKB" id="P05976"/>
    </source>
</evidence>
<evidence type="ECO:0000255" key="3">
    <source>
        <dbReference type="PROSITE-ProRule" id="PRU00448"/>
    </source>
</evidence>
<evidence type="ECO:0000256" key="4">
    <source>
        <dbReference type="SAM" id="MobiDB-lite"/>
    </source>
</evidence>
<evidence type="ECO:0000269" key="5">
    <source>
    </source>
</evidence>
<evidence type="ECO:0000269" key="6">
    <source>
    </source>
</evidence>
<evidence type="ECO:0000303" key="7">
    <source>
    </source>
</evidence>
<evidence type="ECO:0000305" key="8"/>
<evidence type="ECO:0007829" key="9">
    <source>
        <dbReference type="PDB" id="6YSY"/>
    </source>
</evidence>
<protein>
    <recommendedName>
        <fullName>Myosin light chain 1/3, skeletal muscle isoform</fullName>
        <shortName>MLC1/MLC3</shortName>
        <shortName>MLC1F/MLC3F</shortName>
    </recommendedName>
    <alternativeName>
        <fullName>Myosin light chain alkali 1/2</fullName>
        <shortName>Myosin light chain A1/A2</shortName>
    </alternativeName>
</protein>
<keyword id="KW-0002">3D-structure</keyword>
<keyword id="KW-0007">Acetylation</keyword>
<keyword id="KW-0025">Alternative splicing</keyword>
<keyword id="KW-0903">Direct protein sequencing</keyword>
<keyword id="KW-0488">Methylation</keyword>
<keyword id="KW-0505">Motor protein</keyword>
<keyword id="KW-0514">Muscle protein</keyword>
<keyword id="KW-0518">Myosin</keyword>
<keyword id="KW-0597">Phosphoprotein</keyword>
<keyword id="KW-1185">Reference proteome</keyword>
<keyword id="KW-0677">Repeat</keyword>
<sequence>MAPKKDVKKPAAAAAPAPAPAPAPAPAPAKPKEEKIDLSAIKIEFSKEQQDEFKEAFLLYDRTGDSKITLSQVGDVLRALGTNPTNAEVKKVLGNPSNEEMNAKKIEFEQFLPMLQAISNNKDQGTYEDFVEGLRVFDKEGNGTVMGAELRHVLATLGEKMKEEEVEALMAGQEDSNGCINYEAFVKHIMSI</sequence>
<dbReference type="EMBL" id="X54041">
    <property type="protein sequence ID" value="CAA37974.1"/>
    <property type="molecule type" value="mRNA"/>
</dbReference>
<dbReference type="EMBL" id="X54044">
    <property type="protein sequence ID" value="CAA37977.1"/>
    <property type="molecule type" value="mRNA"/>
</dbReference>
<dbReference type="PIR" id="S12693">
    <property type="entry name" value="MORBL2"/>
</dbReference>
<dbReference type="PIR" id="S15061">
    <property type="entry name" value="MORBLA"/>
</dbReference>
<dbReference type="RefSeq" id="NP_001095183.1">
    <molecule id="P02602-1"/>
    <property type="nucleotide sequence ID" value="NM_001101713.1"/>
</dbReference>
<dbReference type="RefSeq" id="XP_008257145.1">
    <molecule id="P02602-2"/>
    <property type="nucleotide sequence ID" value="XM_008258923.3"/>
</dbReference>
<dbReference type="PDB" id="5H53">
    <property type="method" value="EM"/>
    <property type="resolution" value="5.20 A"/>
    <property type="chains" value="C=41-192"/>
</dbReference>
<dbReference type="PDB" id="6YSY">
    <property type="method" value="X-ray"/>
    <property type="resolution" value="3.25 A"/>
    <property type="chains" value="B=1-192"/>
</dbReference>
<dbReference type="PDBsum" id="5H53"/>
<dbReference type="PDBsum" id="6YSY"/>
<dbReference type="EMDB" id="EMD-6664"/>
<dbReference type="SMR" id="P02602"/>
<dbReference type="FunCoup" id="P02602">
    <property type="interactions" value="27"/>
</dbReference>
<dbReference type="IntAct" id="P02602">
    <property type="interactions" value="1"/>
</dbReference>
<dbReference type="MINT" id="P02602"/>
<dbReference type="STRING" id="9986.ENSOCUP00000038248"/>
<dbReference type="iPTMnet" id="P02602"/>
<dbReference type="PaxDb" id="9986-ENSOCUP00000022702"/>
<dbReference type="Ensembl" id="ENSOCUT00000030846.2">
    <molecule id="P02602-2"/>
    <property type="protein sequence ID" value="ENSOCUP00000022702.2"/>
    <property type="gene ID" value="ENSOCUG00000014182.4"/>
</dbReference>
<dbReference type="Ensembl" id="ENSOCUT00000061230.1">
    <molecule id="P02602-1"/>
    <property type="protein sequence ID" value="ENSOCUP00000049094.1"/>
    <property type="gene ID" value="ENSOCUG00000014182.4"/>
</dbReference>
<dbReference type="GeneID" id="100009400"/>
<dbReference type="KEGG" id="ocu:100009400"/>
<dbReference type="CTD" id="4632"/>
<dbReference type="eggNOG" id="KOG0030">
    <property type="taxonomic scope" value="Eukaryota"/>
</dbReference>
<dbReference type="GeneTree" id="ENSGT01030000234570"/>
<dbReference type="InParanoid" id="P02602"/>
<dbReference type="OrthoDB" id="5959761at2759"/>
<dbReference type="TreeFam" id="TF351553"/>
<dbReference type="SABIO-RK" id="P02602"/>
<dbReference type="Proteomes" id="UP000001811">
    <property type="component" value="Chromosome 7"/>
</dbReference>
<dbReference type="Bgee" id="ENSOCUG00000014182">
    <property type="expression patterns" value="Expressed in skeletal muscle tissue and 12 other cell types or tissues"/>
</dbReference>
<dbReference type="ExpressionAtlas" id="P02602">
    <property type="expression patterns" value="baseline"/>
</dbReference>
<dbReference type="GO" id="GO:0043292">
    <property type="term" value="C:contractile muscle fiber"/>
    <property type="evidence" value="ECO:0007669"/>
    <property type="project" value="TreeGrafter"/>
</dbReference>
<dbReference type="GO" id="GO:0016460">
    <property type="term" value="C:myosin II complex"/>
    <property type="evidence" value="ECO:0007669"/>
    <property type="project" value="TreeGrafter"/>
</dbReference>
<dbReference type="GO" id="GO:0005509">
    <property type="term" value="F:calcium ion binding"/>
    <property type="evidence" value="ECO:0007669"/>
    <property type="project" value="InterPro"/>
</dbReference>
<dbReference type="GO" id="GO:0008307">
    <property type="term" value="F:structural constituent of muscle"/>
    <property type="evidence" value="ECO:0000250"/>
    <property type="project" value="UniProtKB"/>
</dbReference>
<dbReference type="CDD" id="cd00051">
    <property type="entry name" value="EFh"/>
    <property type="match status" value="1"/>
</dbReference>
<dbReference type="FunFam" id="1.10.238.10:FF:000019">
    <property type="entry name" value="Myosin light chain 1 skeletal"/>
    <property type="match status" value="1"/>
</dbReference>
<dbReference type="FunFam" id="1.10.238.10:FF:000056">
    <property type="entry name" value="Myosin light chain 1 skeletal"/>
    <property type="match status" value="1"/>
</dbReference>
<dbReference type="Gene3D" id="1.10.238.10">
    <property type="entry name" value="EF-hand"/>
    <property type="match status" value="2"/>
</dbReference>
<dbReference type="InterPro" id="IPR050230">
    <property type="entry name" value="CALM/Myosin/TropC-like"/>
</dbReference>
<dbReference type="InterPro" id="IPR011992">
    <property type="entry name" value="EF-hand-dom_pair"/>
</dbReference>
<dbReference type="InterPro" id="IPR002048">
    <property type="entry name" value="EF_hand_dom"/>
</dbReference>
<dbReference type="PANTHER" id="PTHR23048">
    <property type="entry name" value="MYOSIN LIGHT CHAIN 1, 3"/>
    <property type="match status" value="1"/>
</dbReference>
<dbReference type="PANTHER" id="PTHR23048:SF3">
    <property type="entry name" value="MYOSIN LIGHT CHAIN 1_3, SKELETAL MUSCLE ISOFORM"/>
    <property type="match status" value="1"/>
</dbReference>
<dbReference type="SMART" id="SM00054">
    <property type="entry name" value="EFh"/>
    <property type="match status" value="2"/>
</dbReference>
<dbReference type="SUPFAM" id="SSF47473">
    <property type="entry name" value="EF-hand"/>
    <property type="match status" value="1"/>
</dbReference>
<dbReference type="PROSITE" id="PS50222">
    <property type="entry name" value="EF_HAND_2"/>
    <property type="match status" value="3"/>
</dbReference>
<feature type="initiator methionine" description="Removed">
    <location>
        <position position="1"/>
    </location>
</feature>
<feature type="chain" id="PRO_0000198683" description="Myosin light chain 1/3, skeletal muscle isoform">
    <location>
        <begin position="2"/>
        <end position="192"/>
    </location>
</feature>
<feature type="domain" description="EF-hand 1" evidence="3">
    <location>
        <begin position="48"/>
        <end position="83"/>
    </location>
</feature>
<feature type="domain" description="EF-hand 2" evidence="3">
    <location>
        <begin position="125"/>
        <end position="160"/>
    </location>
</feature>
<feature type="domain" description="EF-hand 3" evidence="3">
    <location>
        <begin position="160"/>
        <end position="192"/>
    </location>
</feature>
<feature type="region of interest" description="Disordered" evidence="4">
    <location>
        <begin position="1"/>
        <end position="34"/>
    </location>
</feature>
<feature type="compositionally biased region" description="Pro residues" evidence="4">
    <location>
        <begin position="17"/>
        <end position="29"/>
    </location>
</feature>
<feature type="modified residue" description="N,N,N-trimethylalanine" evidence="6">
    <location>
        <position position="2"/>
    </location>
</feature>
<feature type="modified residue" description="Phosphothreonine" evidence="1">
    <location>
        <position position="69"/>
    </location>
</feature>
<feature type="modified residue" description="Phosphoserine" evidence="1">
    <location>
        <position position="71"/>
    </location>
</feature>
<feature type="modified residue" description="Phosphothreonine" evidence="1">
    <location>
        <position position="85"/>
    </location>
</feature>
<feature type="modified residue" description="Phosphoserine" evidence="1">
    <location>
        <position position="97"/>
    </location>
</feature>
<feature type="splice variant" id="VSP_038688" description="In isoform MLC3." evidence="7">
    <original>MAPKKDVKKPAAAAAPAPAPAPAPAPAPAKPKEEKIDLSAIKIEFSKEQQD</original>
    <variation>MSFSADQIA</variation>
    <location>
        <begin position="1"/>
        <end position="51"/>
    </location>
</feature>
<feature type="sequence conflict" description="In Ref. 2; AA sequence." evidence="8" ref="2">
    <original>D</original>
    <variation>N</variation>
    <location>
        <position position="6"/>
    </location>
</feature>
<feature type="sequence conflict" description="In Ref. 2; AA sequence." evidence="8" ref="2">
    <original>A</original>
    <variation>KA</variation>
    <location>
        <position position="19"/>
    </location>
</feature>
<feature type="sequence conflict" description="In Ref. 2; AA sequence." evidence="8" ref="2">
    <location>
        <position position="30"/>
    </location>
</feature>
<feature type="sequence conflict" description="In Ref. 2; AA sequence." evidence="8" ref="2">
    <original>NEE</original>
    <variation>DEQ</variation>
    <location>
        <begin position="98"/>
        <end position="100"/>
    </location>
</feature>
<feature type="sequence conflict" description="In Ref. 2; AA sequence." evidence="8" ref="2">
    <original>NGTV</original>
    <variation>DTVG</variation>
    <location>
        <begin position="142"/>
        <end position="145"/>
    </location>
</feature>
<feature type="helix" evidence="9">
    <location>
        <begin position="47"/>
        <end position="59"/>
    </location>
</feature>
<feature type="strand" evidence="9">
    <location>
        <begin position="62"/>
        <end position="69"/>
    </location>
</feature>
<feature type="helix" evidence="9">
    <location>
        <begin position="70"/>
        <end position="79"/>
    </location>
</feature>
<feature type="helix" evidence="9">
    <location>
        <begin position="86"/>
        <end position="92"/>
    </location>
</feature>
<feature type="helix" evidence="9">
    <location>
        <begin position="98"/>
        <end position="103"/>
    </location>
</feature>
<feature type="strand" evidence="9">
    <location>
        <begin position="105"/>
        <end position="107"/>
    </location>
</feature>
<feature type="helix" evidence="9">
    <location>
        <begin position="108"/>
        <end position="120"/>
    </location>
</feature>
<feature type="helix" evidence="9">
    <location>
        <begin position="127"/>
        <end position="135"/>
    </location>
</feature>
<feature type="strand" evidence="9">
    <location>
        <begin position="140"/>
        <end position="143"/>
    </location>
</feature>
<feature type="helix" evidence="9">
    <location>
        <begin position="147"/>
        <end position="156"/>
    </location>
</feature>
<feature type="strand" evidence="9">
    <location>
        <begin position="157"/>
        <end position="159"/>
    </location>
</feature>
<feature type="helix" evidence="9">
    <location>
        <begin position="163"/>
        <end position="169"/>
    </location>
</feature>
<feature type="strand" evidence="9">
    <location>
        <begin position="178"/>
        <end position="180"/>
    </location>
</feature>
<feature type="helix" evidence="9">
    <location>
        <begin position="182"/>
        <end position="189"/>
    </location>
</feature>
<feature type="initiator methionine" description="Removed" evidence="5">
    <location sequence="P02602-2">
        <position position="1"/>
    </location>
</feature>
<feature type="modified residue" description="N-acetylserine" evidence="5">
    <location sequence="P02602-2">
        <position position="2"/>
    </location>
</feature>